<gene>
    <name type="primary">US33A</name>
</gene>
<proteinExistence type="predicted"/>
<organismHost>
    <name type="scientific">Homo sapiens</name>
    <name type="common">Human</name>
    <dbReference type="NCBI Taxonomy" id="9606"/>
</organismHost>
<protein>
    <recommendedName>
        <fullName>Uncharacterized protein US33A</fullName>
    </recommendedName>
</protein>
<keyword id="KW-1185">Reference proteome</keyword>
<accession>F7V999</accession>
<sequence length="57" mass="6914">MSLRFPERAGYEKLGYRPHAKRVWVHDPLGLTRFIMRQLMMYPLVLPFTFPFYVPRS</sequence>
<dbReference type="EMBL" id="AY446894">
    <property type="protein sequence ID" value="AEJ33670.1"/>
    <property type="molecule type" value="Genomic_DNA"/>
</dbReference>
<dbReference type="RefSeq" id="YP_004940332.1">
    <property type="nucleotide sequence ID" value="NC_006273.2"/>
</dbReference>
<dbReference type="GeneID" id="13229472"/>
<dbReference type="KEGG" id="vg:13229472"/>
<dbReference type="Reactome" id="R-HSA-9609690">
    <property type="pathway name" value="HCMV Early Events"/>
</dbReference>
<dbReference type="Proteomes" id="UP000000938">
    <property type="component" value="Segment"/>
</dbReference>
<organism>
    <name type="scientific">Human cytomegalovirus (strain Merlin)</name>
    <name type="common">HHV-5</name>
    <name type="synonym">Human herpesvirus 5</name>
    <dbReference type="NCBI Taxonomy" id="295027"/>
    <lineage>
        <taxon>Viruses</taxon>
        <taxon>Duplodnaviria</taxon>
        <taxon>Heunggongvirae</taxon>
        <taxon>Peploviricota</taxon>
        <taxon>Herviviricetes</taxon>
        <taxon>Herpesvirales</taxon>
        <taxon>Orthoherpesviridae</taxon>
        <taxon>Betaherpesvirinae</taxon>
        <taxon>Cytomegalovirus</taxon>
        <taxon>Cytomegalovirus humanbeta5</taxon>
        <taxon>Human cytomegalovirus</taxon>
    </lineage>
</organism>
<name>US33A_HCMVM</name>
<feature type="chain" id="PRO_0000418326" description="Uncharacterized protein US33A">
    <location>
        <begin position="1"/>
        <end position="57"/>
    </location>
</feature>
<reference key="1">
    <citation type="journal article" date="2004" name="J. Gen. Virol.">
        <title>Genetic content of wild-type human cytomegalovirus.</title>
        <authorList>
            <person name="Dolan A."/>
            <person name="Cunningham C."/>
            <person name="Hector R.D."/>
            <person name="Hassan-Walker A.F."/>
            <person name="Lee L."/>
            <person name="Addison C."/>
            <person name="Dargan D.J."/>
            <person name="McGeoch D.J."/>
            <person name="Gatherer D."/>
            <person name="Emery V.C."/>
            <person name="Griffiths P.D."/>
            <person name="Sinzger C."/>
            <person name="McSharry B.P."/>
            <person name="Wilkinson G.W.G."/>
            <person name="Davison A.J."/>
        </authorList>
    </citation>
    <scope>NUCLEOTIDE SEQUENCE [LARGE SCALE GENOMIC DNA]</scope>
</reference>